<comment type="function">
    <text evidence="1">Required for the formation of a threonylcarbamoyl group on adenosine at position 37 (t(6)A37) in tRNAs that read codons beginning with adenine. Is involved in the transfer of the threonylcarbamoyl moiety of threonylcarbamoyl-AMP (TC-AMP) to the N6 group of A37, together with TsaE and TsaB. TsaD likely plays a direct catalytic role in this reaction.</text>
</comment>
<comment type="catalytic activity">
    <reaction evidence="1">
        <text>L-threonylcarbamoyladenylate + adenosine(37) in tRNA = N(6)-L-threonylcarbamoyladenosine(37) in tRNA + AMP + H(+)</text>
        <dbReference type="Rhea" id="RHEA:37059"/>
        <dbReference type="Rhea" id="RHEA-COMP:10162"/>
        <dbReference type="Rhea" id="RHEA-COMP:10163"/>
        <dbReference type="ChEBI" id="CHEBI:15378"/>
        <dbReference type="ChEBI" id="CHEBI:73682"/>
        <dbReference type="ChEBI" id="CHEBI:74411"/>
        <dbReference type="ChEBI" id="CHEBI:74418"/>
        <dbReference type="ChEBI" id="CHEBI:456215"/>
        <dbReference type="EC" id="2.3.1.234"/>
    </reaction>
</comment>
<comment type="cofactor">
    <cofactor evidence="1">
        <name>Fe(2+)</name>
        <dbReference type="ChEBI" id="CHEBI:29033"/>
    </cofactor>
    <text evidence="1">Binds 1 Fe(2+) ion per subunit.</text>
</comment>
<comment type="subcellular location">
    <subcellularLocation>
        <location evidence="1">Cytoplasm</location>
    </subcellularLocation>
</comment>
<comment type="similarity">
    <text evidence="1">Belongs to the KAE1 / TsaD family.</text>
</comment>
<evidence type="ECO:0000255" key="1">
    <source>
        <dbReference type="HAMAP-Rule" id="MF_01445"/>
    </source>
</evidence>
<name>TSAD_CLOB6</name>
<accession>C3KUS7</accession>
<reference key="1">
    <citation type="submission" date="2008-05" db="EMBL/GenBank/DDBJ databases">
        <title>Genome sequence of Clostridium botulinum Ba4 strain 657.</title>
        <authorList>
            <person name="Shrivastava S."/>
            <person name="Brown J.L."/>
            <person name="Bruce D."/>
            <person name="Detter C."/>
            <person name="Munk C."/>
            <person name="Smith L.A."/>
            <person name="Smith T.J."/>
            <person name="Sutton G."/>
            <person name="Brettin T.S."/>
        </authorList>
    </citation>
    <scope>NUCLEOTIDE SEQUENCE [LARGE SCALE GENOMIC DNA]</scope>
    <source>
        <strain>657 / Type Ba4</strain>
    </source>
</reference>
<proteinExistence type="inferred from homology"/>
<organism>
    <name type="scientific">Clostridium botulinum (strain 657 / Type Ba4)</name>
    <dbReference type="NCBI Taxonomy" id="515621"/>
    <lineage>
        <taxon>Bacteria</taxon>
        <taxon>Bacillati</taxon>
        <taxon>Bacillota</taxon>
        <taxon>Clostridia</taxon>
        <taxon>Eubacteriales</taxon>
        <taxon>Clostridiaceae</taxon>
        <taxon>Clostridium</taxon>
    </lineage>
</organism>
<sequence length="340" mass="36606">MKESINILAIESSCDETSAAVVINGREVLSNIIASQISTHEKFGGVVPEVASRKHIEVISAVVQEALDEANFTLDDIDAIGVTYGPGLVGALLVGLQYAKGLAFATGKPLIGVNHIEGHISANFIEYKDLKPPFMCLVVSGGHTFIVYMKDYGEFEVLGETRDDAAGEAFDKVARAIGLGYPGGPKIDKISKEGNEEAIKFPRANFHDDTLDFSFSGIKSAVLNYLNKKEMKGEEINRADVAASFQKSVVDVLVDNTIKACMSKKVDKIAVAGGVAANSCLRETLVRECKKKGIEVLIPPFILCTDNAAMIGSAAYFEYIKGRRTSLDINAVPNLKLGER</sequence>
<protein>
    <recommendedName>
        <fullName evidence="1">tRNA N6-adenosine threonylcarbamoyltransferase</fullName>
        <ecNumber evidence="1">2.3.1.234</ecNumber>
    </recommendedName>
    <alternativeName>
        <fullName evidence="1">N6-L-threonylcarbamoyladenine synthase</fullName>
        <shortName evidence="1">t(6)A synthase</shortName>
    </alternativeName>
    <alternativeName>
        <fullName evidence="1">t(6)A37 threonylcarbamoyladenosine biosynthesis protein TsaD</fullName>
    </alternativeName>
    <alternativeName>
        <fullName evidence="1">tRNA threonylcarbamoyladenosine biosynthesis protein TsaD</fullName>
    </alternativeName>
</protein>
<feature type="chain" id="PRO_1000215294" description="tRNA N6-adenosine threonylcarbamoyltransferase">
    <location>
        <begin position="1"/>
        <end position="340"/>
    </location>
</feature>
<feature type="binding site" evidence="1">
    <location>
        <position position="115"/>
    </location>
    <ligand>
        <name>Fe cation</name>
        <dbReference type="ChEBI" id="CHEBI:24875"/>
    </ligand>
</feature>
<feature type="binding site" evidence="1">
    <location>
        <position position="119"/>
    </location>
    <ligand>
        <name>Fe cation</name>
        <dbReference type="ChEBI" id="CHEBI:24875"/>
    </ligand>
</feature>
<feature type="binding site" evidence="1">
    <location>
        <begin position="138"/>
        <end position="142"/>
    </location>
    <ligand>
        <name>substrate</name>
    </ligand>
</feature>
<feature type="binding site" evidence="1">
    <location>
        <position position="171"/>
    </location>
    <ligand>
        <name>substrate</name>
    </ligand>
</feature>
<feature type="binding site" evidence="1">
    <location>
        <position position="184"/>
    </location>
    <ligand>
        <name>substrate</name>
    </ligand>
</feature>
<feature type="binding site" evidence="1">
    <location>
        <position position="188"/>
    </location>
    <ligand>
        <name>substrate</name>
    </ligand>
</feature>
<feature type="binding site" evidence="1">
    <location>
        <position position="278"/>
    </location>
    <ligand>
        <name>substrate</name>
    </ligand>
</feature>
<feature type="binding site" evidence="1">
    <location>
        <position position="306"/>
    </location>
    <ligand>
        <name>Fe cation</name>
        <dbReference type="ChEBI" id="CHEBI:24875"/>
    </ligand>
</feature>
<dbReference type="EC" id="2.3.1.234" evidence="1"/>
<dbReference type="EMBL" id="CP001083">
    <property type="protein sequence ID" value="ACQ52422.1"/>
    <property type="molecule type" value="Genomic_DNA"/>
</dbReference>
<dbReference type="RefSeq" id="WP_003360371.1">
    <property type="nucleotide sequence ID" value="NC_012658.1"/>
</dbReference>
<dbReference type="SMR" id="C3KUS7"/>
<dbReference type="KEGG" id="cbi:CLJ_B3594"/>
<dbReference type="HOGENOM" id="CLU_023208_0_2_9"/>
<dbReference type="Proteomes" id="UP000002333">
    <property type="component" value="Chromosome"/>
</dbReference>
<dbReference type="GO" id="GO:0005737">
    <property type="term" value="C:cytoplasm"/>
    <property type="evidence" value="ECO:0007669"/>
    <property type="project" value="UniProtKB-SubCell"/>
</dbReference>
<dbReference type="GO" id="GO:0005506">
    <property type="term" value="F:iron ion binding"/>
    <property type="evidence" value="ECO:0007669"/>
    <property type="project" value="UniProtKB-UniRule"/>
</dbReference>
<dbReference type="GO" id="GO:0061711">
    <property type="term" value="F:N(6)-L-threonylcarbamoyladenine synthase activity"/>
    <property type="evidence" value="ECO:0007669"/>
    <property type="project" value="UniProtKB-EC"/>
</dbReference>
<dbReference type="GO" id="GO:0002949">
    <property type="term" value="P:tRNA threonylcarbamoyladenosine modification"/>
    <property type="evidence" value="ECO:0007669"/>
    <property type="project" value="UniProtKB-UniRule"/>
</dbReference>
<dbReference type="CDD" id="cd24133">
    <property type="entry name" value="ASKHA_NBD_TsaD_bac"/>
    <property type="match status" value="1"/>
</dbReference>
<dbReference type="FunFam" id="3.30.420.40:FF:000012">
    <property type="entry name" value="tRNA N6-adenosine threonylcarbamoyltransferase"/>
    <property type="match status" value="1"/>
</dbReference>
<dbReference type="FunFam" id="3.30.420.40:FF:000040">
    <property type="entry name" value="tRNA N6-adenosine threonylcarbamoyltransferase"/>
    <property type="match status" value="1"/>
</dbReference>
<dbReference type="Gene3D" id="3.30.420.40">
    <property type="match status" value="2"/>
</dbReference>
<dbReference type="HAMAP" id="MF_01445">
    <property type="entry name" value="TsaD"/>
    <property type="match status" value="1"/>
</dbReference>
<dbReference type="InterPro" id="IPR043129">
    <property type="entry name" value="ATPase_NBD"/>
</dbReference>
<dbReference type="InterPro" id="IPR000905">
    <property type="entry name" value="Gcp-like_dom"/>
</dbReference>
<dbReference type="InterPro" id="IPR017861">
    <property type="entry name" value="KAE1/TsaD"/>
</dbReference>
<dbReference type="InterPro" id="IPR022450">
    <property type="entry name" value="TsaD"/>
</dbReference>
<dbReference type="NCBIfam" id="TIGR00329">
    <property type="entry name" value="gcp_kae1"/>
    <property type="match status" value="1"/>
</dbReference>
<dbReference type="NCBIfam" id="TIGR03723">
    <property type="entry name" value="T6A_TsaD_YgjD"/>
    <property type="match status" value="1"/>
</dbReference>
<dbReference type="PANTHER" id="PTHR11735">
    <property type="entry name" value="TRNA N6-ADENOSINE THREONYLCARBAMOYLTRANSFERASE"/>
    <property type="match status" value="1"/>
</dbReference>
<dbReference type="PANTHER" id="PTHR11735:SF6">
    <property type="entry name" value="TRNA N6-ADENOSINE THREONYLCARBAMOYLTRANSFERASE, MITOCHONDRIAL"/>
    <property type="match status" value="1"/>
</dbReference>
<dbReference type="Pfam" id="PF00814">
    <property type="entry name" value="TsaD"/>
    <property type="match status" value="1"/>
</dbReference>
<dbReference type="PRINTS" id="PR00789">
    <property type="entry name" value="OSIALOPTASE"/>
</dbReference>
<dbReference type="SUPFAM" id="SSF53067">
    <property type="entry name" value="Actin-like ATPase domain"/>
    <property type="match status" value="2"/>
</dbReference>
<gene>
    <name evidence="1" type="primary">tsaD</name>
    <name type="synonym">gcp</name>
    <name type="ordered locus">CLJ_B3594</name>
</gene>
<keyword id="KW-0012">Acyltransferase</keyword>
<keyword id="KW-0963">Cytoplasm</keyword>
<keyword id="KW-0408">Iron</keyword>
<keyword id="KW-0479">Metal-binding</keyword>
<keyword id="KW-0808">Transferase</keyword>
<keyword id="KW-0819">tRNA processing</keyword>